<organism>
    <name type="scientific">Acidovorax ebreus (strain TPSY)</name>
    <name type="common">Diaphorobacter sp. (strain TPSY)</name>
    <dbReference type="NCBI Taxonomy" id="535289"/>
    <lineage>
        <taxon>Bacteria</taxon>
        <taxon>Pseudomonadati</taxon>
        <taxon>Pseudomonadota</taxon>
        <taxon>Betaproteobacteria</taxon>
        <taxon>Burkholderiales</taxon>
        <taxon>Comamonadaceae</taxon>
        <taxon>Diaphorobacter</taxon>
    </lineage>
</organism>
<comment type="function">
    <text evidence="1">DNA-dependent RNA polymerase catalyzes the transcription of DNA into RNA using the four ribonucleoside triphosphates as substrates.</text>
</comment>
<comment type="catalytic activity">
    <reaction evidence="1">
        <text>RNA(n) + a ribonucleoside 5'-triphosphate = RNA(n+1) + diphosphate</text>
        <dbReference type="Rhea" id="RHEA:21248"/>
        <dbReference type="Rhea" id="RHEA-COMP:14527"/>
        <dbReference type="Rhea" id="RHEA-COMP:17342"/>
        <dbReference type="ChEBI" id="CHEBI:33019"/>
        <dbReference type="ChEBI" id="CHEBI:61557"/>
        <dbReference type="ChEBI" id="CHEBI:140395"/>
        <dbReference type="EC" id="2.7.7.6"/>
    </reaction>
</comment>
<comment type="subunit">
    <text evidence="1">Homodimer. The RNAP catalytic core consists of 2 alpha, 1 beta, 1 beta' and 1 omega subunit. When a sigma factor is associated with the core the holoenzyme is formed, which can initiate transcription.</text>
</comment>
<comment type="domain">
    <text evidence="1">The N-terminal domain is essential for RNAP assembly and basal transcription, whereas the C-terminal domain is involved in interaction with transcriptional regulators and with upstream promoter elements.</text>
</comment>
<comment type="similarity">
    <text evidence="1">Belongs to the RNA polymerase alpha chain family.</text>
</comment>
<reference key="1">
    <citation type="submission" date="2009-01" db="EMBL/GenBank/DDBJ databases">
        <title>Complete sequence of Diaphorobacter sp. TPSY.</title>
        <authorList>
            <consortium name="US DOE Joint Genome Institute"/>
            <person name="Lucas S."/>
            <person name="Copeland A."/>
            <person name="Lapidus A."/>
            <person name="Glavina del Rio T."/>
            <person name="Tice H."/>
            <person name="Bruce D."/>
            <person name="Goodwin L."/>
            <person name="Pitluck S."/>
            <person name="Chertkov O."/>
            <person name="Brettin T."/>
            <person name="Detter J.C."/>
            <person name="Han C."/>
            <person name="Larimer F."/>
            <person name="Land M."/>
            <person name="Hauser L."/>
            <person name="Kyrpides N."/>
            <person name="Mikhailova N."/>
            <person name="Coates J.D."/>
        </authorList>
    </citation>
    <scope>NUCLEOTIDE SEQUENCE [LARGE SCALE GENOMIC DNA]</scope>
    <source>
        <strain>TPSY</strain>
    </source>
</reference>
<protein>
    <recommendedName>
        <fullName evidence="1">DNA-directed RNA polymerase subunit alpha</fullName>
        <shortName evidence="1">RNAP subunit alpha</shortName>
        <ecNumber evidence="1">2.7.7.6</ecNumber>
    </recommendedName>
    <alternativeName>
        <fullName evidence="1">RNA polymerase subunit alpha</fullName>
    </alternativeName>
    <alternativeName>
        <fullName evidence="1">Transcriptase subunit alpha</fullName>
    </alternativeName>
</protein>
<name>RPOA_ACIET</name>
<feature type="chain" id="PRO_1000196636" description="DNA-directed RNA polymerase subunit alpha">
    <location>
        <begin position="1"/>
        <end position="330"/>
    </location>
</feature>
<feature type="region of interest" description="Alpha N-terminal domain (alpha-NTD)" evidence="1">
    <location>
        <begin position="1"/>
        <end position="231"/>
    </location>
</feature>
<feature type="region of interest" description="Alpha C-terminal domain (alpha-CTD)" evidence="1">
    <location>
        <begin position="250"/>
        <end position="330"/>
    </location>
</feature>
<keyword id="KW-0240">DNA-directed RNA polymerase</keyword>
<keyword id="KW-0548">Nucleotidyltransferase</keyword>
<keyword id="KW-1185">Reference proteome</keyword>
<keyword id="KW-0804">Transcription</keyword>
<keyword id="KW-0808">Transferase</keyword>
<gene>
    <name evidence="1" type="primary">rpoA</name>
    <name type="ordered locus">Dtpsy_0398</name>
</gene>
<accession>B9MBW2</accession>
<dbReference type="EC" id="2.7.7.6" evidence="1"/>
<dbReference type="EMBL" id="CP001392">
    <property type="protein sequence ID" value="ACM31882.1"/>
    <property type="molecule type" value="Genomic_DNA"/>
</dbReference>
<dbReference type="RefSeq" id="WP_011803867.1">
    <property type="nucleotide sequence ID" value="NC_011992.1"/>
</dbReference>
<dbReference type="SMR" id="B9MBW2"/>
<dbReference type="KEGG" id="dia:Dtpsy_0398"/>
<dbReference type="eggNOG" id="COG0202">
    <property type="taxonomic scope" value="Bacteria"/>
</dbReference>
<dbReference type="HOGENOM" id="CLU_053084_0_1_4"/>
<dbReference type="Proteomes" id="UP000000450">
    <property type="component" value="Chromosome"/>
</dbReference>
<dbReference type="GO" id="GO:0005737">
    <property type="term" value="C:cytoplasm"/>
    <property type="evidence" value="ECO:0007669"/>
    <property type="project" value="UniProtKB-ARBA"/>
</dbReference>
<dbReference type="GO" id="GO:0000428">
    <property type="term" value="C:DNA-directed RNA polymerase complex"/>
    <property type="evidence" value="ECO:0007669"/>
    <property type="project" value="UniProtKB-KW"/>
</dbReference>
<dbReference type="GO" id="GO:0003677">
    <property type="term" value="F:DNA binding"/>
    <property type="evidence" value="ECO:0007669"/>
    <property type="project" value="UniProtKB-UniRule"/>
</dbReference>
<dbReference type="GO" id="GO:0003899">
    <property type="term" value="F:DNA-directed RNA polymerase activity"/>
    <property type="evidence" value="ECO:0007669"/>
    <property type="project" value="UniProtKB-UniRule"/>
</dbReference>
<dbReference type="GO" id="GO:0046983">
    <property type="term" value="F:protein dimerization activity"/>
    <property type="evidence" value="ECO:0007669"/>
    <property type="project" value="InterPro"/>
</dbReference>
<dbReference type="GO" id="GO:0006351">
    <property type="term" value="P:DNA-templated transcription"/>
    <property type="evidence" value="ECO:0007669"/>
    <property type="project" value="UniProtKB-UniRule"/>
</dbReference>
<dbReference type="CDD" id="cd06928">
    <property type="entry name" value="RNAP_alpha_NTD"/>
    <property type="match status" value="1"/>
</dbReference>
<dbReference type="FunFam" id="1.10.150.20:FF:000001">
    <property type="entry name" value="DNA-directed RNA polymerase subunit alpha"/>
    <property type="match status" value="1"/>
</dbReference>
<dbReference type="FunFam" id="2.170.120.12:FF:000001">
    <property type="entry name" value="DNA-directed RNA polymerase subunit alpha"/>
    <property type="match status" value="1"/>
</dbReference>
<dbReference type="Gene3D" id="1.10.150.20">
    <property type="entry name" value="5' to 3' exonuclease, C-terminal subdomain"/>
    <property type="match status" value="1"/>
</dbReference>
<dbReference type="Gene3D" id="2.170.120.12">
    <property type="entry name" value="DNA-directed RNA polymerase, insert domain"/>
    <property type="match status" value="1"/>
</dbReference>
<dbReference type="Gene3D" id="3.30.1360.10">
    <property type="entry name" value="RNA polymerase, RBP11-like subunit"/>
    <property type="match status" value="1"/>
</dbReference>
<dbReference type="HAMAP" id="MF_00059">
    <property type="entry name" value="RNApol_bact_RpoA"/>
    <property type="match status" value="1"/>
</dbReference>
<dbReference type="InterPro" id="IPR011262">
    <property type="entry name" value="DNA-dir_RNA_pol_insert"/>
</dbReference>
<dbReference type="InterPro" id="IPR011263">
    <property type="entry name" value="DNA-dir_RNA_pol_RpoA/D/Rpb3"/>
</dbReference>
<dbReference type="InterPro" id="IPR011773">
    <property type="entry name" value="DNA-dir_RpoA"/>
</dbReference>
<dbReference type="InterPro" id="IPR036603">
    <property type="entry name" value="RBP11-like"/>
</dbReference>
<dbReference type="InterPro" id="IPR011260">
    <property type="entry name" value="RNAP_asu_C"/>
</dbReference>
<dbReference type="InterPro" id="IPR036643">
    <property type="entry name" value="RNApol_insert_sf"/>
</dbReference>
<dbReference type="NCBIfam" id="NF003513">
    <property type="entry name" value="PRK05182.1-2"/>
    <property type="match status" value="1"/>
</dbReference>
<dbReference type="NCBIfam" id="NF003519">
    <property type="entry name" value="PRK05182.2-5"/>
    <property type="match status" value="1"/>
</dbReference>
<dbReference type="NCBIfam" id="TIGR02027">
    <property type="entry name" value="rpoA"/>
    <property type="match status" value="1"/>
</dbReference>
<dbReference type="Pfam" id="PF01000">
    <property type="entry name" value="RNA_pol_A_bac"/>
    <property type="match status" value="1"/>
</dbReference>
<dbReference type="Pfam" id="PF03118">
    <property type="entry name" value="RNA_pol_A_CTD"/>
    <property type="match status" value="1"/>
</dbReference>
<dbReference type="Pfam" id="PF01193">
    <property type="entry name" value="RNA_pol_L"/>
    <property type="match status" value="1"/>
</dbReference>
<dbReference type="SMART" id="SM00662">
    <property type="entry name" value="RPOLD"/>
    <property type="match status" value="1"/>
</dbReference>
<dbReference type="SUPFAM" id="SSF47789">
    <property type="entry name" value="C-terminal domain of RNA polymerase alpha subunit"/>
    <property type="match status" value="1"/>
</dbReference>
<dbReference type="SUPFAM" id="SSF56553">
    <property type="entry name" value="Insert subdomain of RNA polymerase alpha subunit"/>
    <property type="match status" value="1"/>
</dbReference>
<dbReference type="SUPFAM" id="SSF55257">
    <property type="entry name" value="RBP11-like subunits of RNA polymerase"/>
    <property type="match status" value="1"/>
</dbReference>
<proteinExistence type="inferred from homology"/>
<evidence type="ECO:0000255" key="1">
    <source>
        <dbReference type="HAMAP-Rule" id="MF_00059"/>
    </source>
</evidence>
<sequence length="330" mass="36056">MQTNLLKPKAINVEQLGPNRAKVALEPFERGYGHTLGNAIRRVLLSSMVGYAATEVTIAGVLHEYSSIDGVQEDVVNILLNLKGVVFKLHNRDEVTLSLRKDGEGVVTARDIQTPHDVEIVNPEHVIATLSAGGKLDMQIKVEKGRGYVPGNLRRYADEATKSIGRIVLDASFSPVKRVSYTVESARVEQRTDLDKLVVEIETNGAITAEDAVRASAKILVEQLAVFAQLEGGELAAFDAPASSRGAATFDPILLRPVDELELTVRSANCLKAENIYYIGDLIQRTENELLKTPNLGRKSLNEIKEVLASRGLTLGMKLENWPPAGLDKR</sequence>